<gene>
    <name evidence="1" type="primary">rpmF</name>
    <name type="ordered locus">THA_805</name>
</gene>
<protein>
    <recommendedName>
        <fullName evidence="1">Large ribosomal subunit protein bL32</fullName>
    </recommendedName>
    <alternativeName>
        <fullName evidence="2">50S ribosomal protein L32</fullName>
    </alternativeName>
</protein>
<reference key="1">
    <citation type="journal article" date="2009" name="J. Bacteriol.">
        <title>The genome of Thermosipho africanus TCF52B: lateral genetic connections to the Firmicutes and Archaea.</title>
        <authorList>
            <person name="Nesboe C.L."/>
            <person name="Bapteste E."/>
            <person name="Curtis B."/>
            <person name="Dahle H."/>
            <person name="Lopez P."/>
            <person name="Macleod D."/>
            <person name="Dlutek M."/>
            <person name="Bowman S."/>
            <person name="Zhaxybayeva O."/>
            <person name="Birkeland N.-K."/>
            <person name="Doolittle W.F."/>
        </authorList>
    </citation>
    <scope>NUCLEOTIDE SEQUENCE [LARGE SCALE GENOMIC DNA]</scope>
    <source>
        <strain>TCF52B</strain>
    </source>
</reference>
<feature type="chain" id="PRO_1000120184" description="Large ribosomal subunit protein bL32">
    <location>
        <begin position="1"/>
        <end position="60"/>
    </location>
</feature>
<accession>B7IGQ3</accession>
<organism>
    <name type="scientific">Thermosipho africanus (strain TCF52B)</name>
    <dbReference type="NCBI Taxonomy" id="484019"/>
    <lineage>
        <taxon>Bacteria</taxon>
        <taxon>Thermotogati</taxon>
        <taxon>Thermotogota</taxon>
        <taxon>Thermotogae</taxon>
        <taxon>Thermotogales</taxon>
        <taxon>Fervidobacteriaceae</taxon>
        <taxon>Thermosipho</taxon>
    </lineage>
</organism>
<name>RL32_THEAB</name>
<sequence length="60" mass="6803">MAVPKQKRSRSRTHHKRAKIYRAFSVPVSVCPNCGAPKLPHRVCLNCGHYGKKQVFEVAE</sequence>
<dbReference type="EMBL" id="CP001185">
    <property type="protein sequence ID" value="ACJ75267.1"/>
    <property type="molecule type" value="Genomic_DNA"/>
</dbReference>
<dbReference type="RefSeq" id="WP_004100388.1">
    <property type="nucleotide sequence ID" value="NC_011653.1"/>
</dbReference>
<dbReference type="SMR" id="B7IGQ3"/>
<dbReference type="STRING" id="484019.THA_805"/>
<dbReference type="KEGG" id="taf:THA_805"/>
<dbReference type="eggNOG" id="COG0333">
    <property type="taxonomic scope" value="Bacteria"/>
</dbReference>
<dbReference type="HOGENOM" id="CLU_129084_1_3_0"/>
<dbReference type="OrthoDB" id="9812874at2"/>
<dbReference type="Proteomes" id="UP000002453">
    <property type="component" value="Chromosome"/>
</dbReference>
<dbReference type="GO" id="GO:0015934">
    <property type="term" value="C:large ribosomal subunit"/>
    <property type="evidence" value="ECO:0007669"/>
    <property type="project" value="InterPro"/>
</dbReference>
<dbReference type="GO" id="GO:0003735">
    <property type="term" value="F:structural constituent of ribosome"/>
    <property type="evidence" value="ECO:0007669"/>
    <property type="project" value="InterPro"/>
</dbReference>
<dbReference type="GO" id="GO:0006412">
    <property type="term" value="P:translation"/>
    <property type="evidence" value="ECO:0007669"/>
    <property type="project" value="UniProtKB-UniRule"/>
</dbReference>
<dbReference type="HAMAP" id="MF_00340">
    <property type="entry name" value="Ribosomal_bL32"/>
    <property type="match status" value="1"/>
</dbReference>
<dbReference type="InterPro" id="IPR002677">
    <property type="entry name" value="Ribosomal_bL32"/>
</dbReference>
<dbReference type="InterPro" id="IPR044957">
    <property type="entry name" value="Ribosomal_bL32_bact"/>
</dbReference>
<dbReference type="InterPro" id="IPR011332">
    <property type="entry name" value="Ribosomal_zn-bd"/>
</dbReference>
<dbReference type="NCBIfam" id="TIGR01031">
    <property type="entry name" value="rpmF_bact"/>
    <property type="match status" value="1"/>
</dbReference>
<dbReference type="PANTHER" id="PTHR35534">
    <property type="entry name" value="50S RIBOSOMAL PROTEIN L32"/>
    <property type="match status" value="1"/>
</dbReference>
<dbReference type="PANTHER" id="PTHR35534:SF1">
    <property type="entry name" value="LARGE RIBOSOMAL SUBUNIT PROTEIN BL32"/>
    <property type="match status" value="1"/>
</dbReference>
<dbReference type="Pfam" id="PF01783">
    <property type="entry name" value="Ribosomal_L32p"/>
    <property type="match status" value="1"/>
</dbReference>
<dbReference type="SUPFAM" id="SSF57829">
    <property type="entry name" value="Zn-binding ribosomal proteins"/>
    <property type="match status" value="1"/>
</dbReference>
<proteinExistence type="inferred from homology"/>
<evidence type="ECO:0000255" key="1">
    <source>
        <dbReference type="HAMAP-Rule" id="MF_00340"/>
    </source>
</evidence>
<evidence type="ECO:0000305" key="2"/>
<keyword id="KW-1185">Reference proteome</keyword>
<keyword id="KW-0687">Ribonucleoprotein</keyword>
<keyword id="KW-0689">Ribosomal protein</keyword>
<comment type="similarity">
    <text evidence="1">Belongs to the bacterial ribosomal protein bL32 family.</text>
</comment>